<sequence>MNTIESITADLHGLGVRPGDLIMVHASLKAVGPVEGGAASVVSALRAAVGSAGTLMGYASWDRSPYEETLNGARMDEELRRRWPPFDLATSGTYPGFGLLNRFLLEAPDARRSAHPDASMVAVGPLAATLTEPHRLGQALGEGSPLERFVGHGGKVLLLGAPLDSVTVLHYAEAIAPIPNKRRVTYEMPMLGPDGRVRWELAEDFDSNGILDCFAVDGKPDAVETIAKAYVELGRHREGIVGRAPSYLFEAQDIVSFGVTYLEQHFGAP</sequence>
<dbReference type="EC" id="2.3.1.81"/>
<dbReference type="EMBL" id="M97172">
    <property type="protein sequence ID" value="AAA26548.1"/>
    <property type="molecule type" value="Genomic_DNA"/>
</dbReference>
<dbReference type="PIR" id="A48906">
    <property type="entry name" value="A48906"/>
</dbReference>
<dbReference type="PDB" id="7LAO">
    <property type="method" value="X-ray"/>
    <property type="resolution" value="1.92 A"/>
    <property type="chains" value="A=1-269"/>
</dbReference>
<dbReference type="PDBsum" id="7LAO"/>
<dbReference type="SMR" id="Q01515"/>
<dbReference type="CARD" id="ARO:3002534">
    <property type="molecule name" value="AAC(3)-IIb"/>
    <property type="mechanism identifier" value="ARO:0001004"/>
    <property type="mechanism name" value="antibiotic inactivation"/>
</dbReference>
<dbReference type="KEGG" id="ag:AAA26548"/>
<dbReference type="GO" id="GO:0046353">
    <property type="term" value="F:aminoglycoside 3-N-acetyltransferase activity"/>
    <property type="evidence" value="ECO:0007669"/>
    <property type="project" value="UniProtKB-EC"/>
</dbReference>
<dbReference type="GO" id="GO:0046677">
    <property type="term" value="P:response to antibiotic"/>
    <property type="evidence" value="ECO:0007669"/>
    <property type="project" value="UniProtKB-KW"/>
</dbReference>
<dbReference type="InterPro" id="IPR003679">
    <property type="entry name" value="Amioglycoside_AcTrfase"/>
</dbReference>
<dbReference type="InterPro" id="IPR028345">
    <property type="entry name" value="Antibiotic_NAT-like"/>
</dbReference>
<dbReference type="NCBIfam" id="NF033082">
    <property type="entry name" value="AAC_3"/>
    <property type="match status" value="1"/>
</dbReference>
<dbReference type="NCBIfam" id="NF033080">
    <property type="entry name" value="AAC_3_II"/>
    <property type="match status" value="1"/>
</dbReference>
<dbReference type="PANTHER" id="PTHR11104">
    <property type="entry name" value="AMINOGLYCOSIDE N3-ACETYLTRANSFERASE"/>
    <property type="match status" value="1"/>
</dbReference>
<dbReference type="PANTHER" id="PTHR11104:SF0">
    <property type="entry name" value="SPBETA PROPHAGE-DERIVED AMINOGLYCOSIDE N(3')-ACETYLTRANSFERASE-LIKE PROTEIN YOKD"/>
    <property type="match status" value="1"/>
</dbReference>
<dbReference type="Pfam" id="PF02522">
    <property type="entry name" value="Antibiotic_NAT"/>
    <property type="match status" value="1"/>
</dbReference>
<dbReference type="SUPFAM" id="SSF110710">
    <property type="entry name" value="TTHA0583/YokD-like"/>
    <property type="match status" value="1"/>
</dbReference>
<accession>Q01515</accession>
<name>AAC3_SERMA</name>
<comment type="function">
    <text>Resistance to antibiotics containing the 2-deoxy-streptamine ring including gentamicin, kanamycin, tobramycin, neomycin and apramycin.</text>
</comment>
<comment type="catalytic activity">
    <reaction>
        <text>a 2-deoxystreptamine antibiotic + acetyl-CoA = an N(3)-acetyl-2-deoxystreptamine antibiotic + CoA + H(+)</text>
        <dbReference type="Rhea" id="RHEA:12665"/>
        <dbReference type="ChEBI" id="CHEBI:15378"/>
        <dbReference type="ChEBI" id="CHEBI:57287"/>
        <dbReference type="ChEBI" id="CHEBI:57288"/>
        <dbReference type="ChEBI" id="CHEBI:57921"/>
        <dbReference type="ChEBI" id="CHEBI:77452"/>
        <dbReference type="EC" id="2.3.1.81"/>
    </reaction>
</comment>
<comment type="similarity">
    <text evidence="1">Belongs to the antibiotic N-acetyltransferase family.</text>
</comment>
<gene>
    <name type="primary">aac3-Vb</name>
</gene>
<keyword id="KW-0002">3D-structure</keyword>
<keyword id="KW-0012">Acyltransferase</keyword>
<keyword id="KW-0046">Antibiotic resistance</keyword>
<keyword id="KW-0808">Transferase</keyword>
<evidence type="ECO:0000305" key="1"/>
<evidence type="ECO:0007829" key="2">
    <source>
        <dbReference type="PDB" id="7LAO"/>
    </source>
</evidence>
<organism>
    <name type="scientific">Serratia marcescens</name>
    <dbReference type="NCBI Taxonomy" id="615"/>
    <lineage>
        <taxon>Bacteria</taxon>
        <taxon>Pseudomonadati</taxon>
        <taxon>Pseudomonadota</taxon>
        <taxon>Gammaproteobacteria</taxon>
        <taxon>Enterobacterales</taxon>
        <taxon>Yersiniaceae</taxon>
        <taxon>Serratia</taxon>
    </lineage>
</organism>
<feature type="chain" id="PRO_0000068547" description="Aminoglycoside N(3)-acetyltransferase III">
    <location>
        <begin position="1"/>
        <end position="269"/>
    </location>
</feature>
<feature type="helix" evidence="2">
    <location>
        <begin position="4"/>
        <end position="14"/>
    </location>
</feature>
<feature type="strand" evidence="2">
    <location>
        <begin position="21"/>
        <end position="26"/>
    </location>
</feature>
<feature type="helix" evidence="2">
    <location>
        <begin position="28"/>
        <end position="31"/>
    </location>
</feature>
<feature type="turn" evidence="2">
    <location>
        <begin position="35"/>
        <end position="37"/>
    </location>
</feature>
<feature type="helix" evidence="2">
    <location>
        <begin position="38"/>
        <end position="49"/>
    </location>
</feature>
<feature type="turn" evidence="2">
    <location>
        <begin position="50"/>
        <end position="52"/>
    </location>
</feature>
<feature type="strand" evidence="2">
    <location>
        <begin position="54"/>
        <end position="58"/>
    </location>
</feature>
<feature type="helix" evidence="2">
    <location>
        <begin position="67"/>
        <end position="69"/>
    </location>
</feature>
<feature type="helix" evidence="2">
    <location>
        <begin position="77"/>
        <end position="79"/>
    </location>
</feature>
<feature type="turn" evidence="2">
    <location>
        <begin position="88"/>
        <end position="90"/>
    </location>
</feature>
<feature type="helix" evidence="2">
    <location>
        <begin position="95"/>
        <end position="97"/>
    </location>
</feature>
<feature type="helix" evidence="2">
    <location>
        <begin position="100"/>
        <end position="106"/>
    </location>
</feature>
<feature type="turn" evidence="2">
    <location>
        <begin position="116"/>
        <end position="118"/>
    </location>
</feature>
<feature type="strand" evidence="2">
    <location>
        <begin position="120"/>
        <end position="124"/>
    </location>
</feature>
<feature type="helix" evidence="2">
    <location>
        <begin position="127"/>
        <end position="131"/>
    </location>
</feature>
<feature type="strand" evidence="2">
    <location>
        <begin position="139"/>
        <end position="141"/>
    </location>
</feature>
<feature type="helix" evidence="2">
    <location>
        <begin position="145"/>
        <end position="151"/>
    </location>
</feature>
<feature type="strand" evidence="2">
    <location>
        <begin position="155"/>
        <end position="160"/>
    </location>
</feature>
<feature type="helix" evidence="2">
    <location>
        <begin position="163"/>
        <end position="165"/>
    </location>
</feature>
<feature type="helix" evidence="2">
    <location>
        <begin position="168"/>
        <end position="175"/>
    </location>
</feature>
<feature type="strand" evidence="2">
    <location>
        <begin position="183"/>
        <end position="190"/>
    </location>
</feature>
<feature type="strand" evidence="2">
    <location>
        <begin position="194"/>
        <end position="196"/>
    </location>
</feature>
<feature type="strand" evidence="2">
    <location>
        <begin position="198"/>
        <end position="205"/>
    </location>
</feature>
<feature type="helix" evidence="2">
    <location>
        <begin position="212"/>
        <end position="215"/>
    </location>
</feature>
<feature type="helix" evidence="2">
    <location>
        <begin position="222"/>
        <end position="231"/>
    </location>
</feature>
<feature type="strand" evidence="2">
    <location>
        <begin position="236"/>
        <end position="241"/>
    </location>
</feature>
<feature type="strand" evidence="2">
    <location>
        <begin position="244"/>
        <end position="250"/>
    </location>
</feature>
<feature type="helix" evidence="2">
    <location>
        <begin position="251"/>
        <end position="266"/>
    </location>
</feature>
<protein>
    <recommendedName>
        <fullName>Aminoglycoside N(3)-acetyltransferase III</fullName>
        <ecNumber>2.3.1.81</ecNumber>
    </recommendedName>
    <alternativeName>
        <fullName>ACC(3)-III</fullName>
    </alternativeName>
    <alternativeName>
        <fullName>Aminocyclitol 3-N-acetyltransferase type III</fullName>
    </alternativeName>
    <alternativeName>
        <fullName>Gentamicin-(3)-N-acetyl-transferase</fullName>
    </alternativeName>
</protein>
<proteinExistence type="evidence at protein level"/>
<reference key="1">
    <citation type="journal article" date="1992" name="Antimicrob. Agents Chemother.">
        <title>Cloning and DNA sequence analysis of an aac(3)-Vb gene from Serratia marcescens.</title>
        <authorList>
            <person name="Rather P.N."/>
            <person name="Mierzwa R."/>
            <person name="Hare R.S."/>
            <person name="Miller G.H."/>
            <person name="Shaw K.J."/>
        </authorList>
    </citation>
    <scope>NUCLEOTIDE SEQUENCE [GENOMIC DNA]</scope>
    <source>
        <strain>82041944</strain>
    </source>
</reference>